<proteinExistence type="inferred from homology"/>
<sequence length="429" mass="45370">MSRNQQLFDRAQQTIPGGVNSPVRAFRSVGGTPRFITCAEGAYMWDADGQRYIDYIGSWGPMIVGHAHPDVVRAVQETAAHSFSFGAPTEAEIDMAEEICKLVPSIEQVRLVSSGTEATMSALRLARGFTGRDLIIKFEGCYHGHADSLLVKAGSGLLTFADTTQNAPSSAGVPADVTRHTMVLEYNNVAQLEEAFAQHRGEIAAVIVEVVAGNMNLVRASDAFLKAMRELCTRDGAVLIFDEVMTGFRVALGGAQSHYGITPDMTCLGKVIGGGMPAAAFGGRRDIMAKLAPLGGVYQAGTLSGNPLAVAAGLTTLRLIQAPGFYDKLTAQTRKLADGLSEAARAAGVPFAADAIGGMFGIYFRDGVPGSFAEVTKSDTARFNRFFHAMLDNGVYLAPSAFEAGFVSACHDDAILQATLDAARKAFAA</sequence>
<evidence type="ECO:0000255" key="1">
    <source>
        <dbReference type="HAMAP-Rule" id="MF_00375"/>
    </source>
</evidence>
<comment type="catalytic activity">
    <reaction evidence="1">
        <text>(S)-4-amino-5-oxopentanoate = 5-aminolevulinate</text>
        <dbReference type="Rhea" id="RHEA:14265"/>
        <dbReference type="ChEBI" id="CHEBI:57501"/>
        <dbReference type="ChEBI" id="CHEBI:356416"/>
        <dbReference type="EC" id="5.4.3.8"/>
    </reaction>
</comment>
<comment type="cofactor">
    <cofactor evidence="1">
        <name>pyridoxal 5'-phosphate</name>
        <dbReference type="ChEBI" id="CHEBI:597326"/>
    </cofactor>
</comment>
<comment type="pathway">
    <text evidence="1">Porphyrin-containing compound metabolism; protoporphyrin-IX biosynthesis; 5-aminolevulinate from L-glutamyl-tRNA(Glu): step 2/2.</text>
</comment>
<comment type="subunit">
    <text evidence="1">Homodimer.</text>
</comment>
<comment type="subcellular location">
    <subcellularLocation>
        <location evidence="1">Cytoplasm</location>
    </subcellularLocation>
</comment>
<comment type="similarity">
    <text evidence="1">Belongs to the class-III pyridoxal-phosphate-dependent aminotransferase family. HemL subfamily.</text>
</comment>
<keyword id="KW-0963">Cytoplasm</keyword>
<keyword id="KW-0413">Isomerase</keyword>
<keyword id="KW-0627">Porphyrin biosynthesis</keyword>
<keyword id="KW-0663">Pyridoxal phosphate</keyword>
<dbReference type="EC" id="5.4.3.8" evidence="1"/>
<dbReference type="EMBL" id="CP000090">
    <property type="protein sequence ID" value="AAZ61986.1"/>
    <property type="molecule type" value="Genomic_DNA"/>
</dbReference>
<dbReference type="SMR" id="Q46XZ7"/>
<dbReference type="STRING" id="264198.Reut_A2625"/>
<dbReference type="KEGG" id="reu:Reut_A2625"/>
<dbReference type="eggNOG" id="COG0001">
    <property type="taxonomic scope" value="Bacteria"/>
</dbReference>
<dbReference type="HOGENOM" id="CLU_016922_1_5_4"/>
<dbReference type="OrthoDB" id="3398487at2"/>
<dbReference type="UniPathway" id="UPA00251">
    <property type="reaction ID" value="UER00317"/>
</dbReference>
<dbReference type="GO" id="GO:0005737">
    <property type="term" value="C:cytoplasm"/>
    <property type="evidence" value="ECO:0007669"/>
    <property type="project" value="UniProtKB-SubCell"/>
</dbReference>
<dbReference type="GO" id="GO:0042286">
    <property type="term" value="F:glutamate-1-semialdehyde 2,1-aminomutase activity"/>
    <property type="evidence" value="ECO:0007669"/>
    <property type="project" value="UniProtKB-UniRule"/>
</dbReference>
<dbReference type="GO" id="GO:0030170">
    <property type="term" value="F:pyridoxal phosphate binding"/>
    <property type="evidence" value="ECO:0007669"/>
    <property type="project" value="InterPro"/>
</dbReference>
<dbReference type="GO" id="GO:0008483">
    <property type="term" value="F:transaminase activity"/>
    <property type="evidence" value="ECO:0007669"/>
    <property type="project" value="InterPro"/>
</dbReference>
<dbReference type="GO" id="GO:0006782">
    <property type="term" value="P:protoporphyrinogen IX biosynthetic process"/>
    <property type="evidence" value="ECO:0007669"/>
    <property type="project" value="UniProtKB-UniRule"/>
</dbReference>
<dbReference type="CDD" id="cd00610">
    <property type="entry name" value="OAT_like"/>
    <property type="match status" value="1"/>
</dbReference>
<dbReference type="FunFam" id="3.40.640.10:FF:000021">
    <property type="entry name" value="Glutamate-1-semialdehyde 2,1-aminomutase"/>
    <property type="match status" value="1"/>
</dbReference>
<dbReference type="Gene3D" id="3.90.1150.10">
    <property type="entry name" value="Aspartate Aminotransferase, domain 1"/>
    <property type="match status" value="1"/>
</dbReference>
<dbReference type="Gene3D" id="3.40.640.10">
    <property type="entry name" value="Type I PLP-dependent aspartate aminotransferase-like (Major domain)"/>
    <property type="match status" value="1"/>
</dbReference>
<dbReference type="HAMAP" id="MF_00375">
    <property type="entry name" value="HemL_aminotrans_3"/>
    <property type="match status" value="1"/>
</dbReference>
<dbReference type="InterPro" id="IPR004639">
    <property type="entry name" value="4pyrrol_synth_GluAld_NH2Trfase"/>
</dbReference>
<dbReference type="InterPro" id="IPR005814">
    <property type="entry name" value="Aminotrans_3"/>
</dbReference>
<dbReference type="InterPro" id="IPR049704">
    <property type="entry name" value="Aminotrans_3_PPA_site"/>
</dbReference>
<dbReference type="InterPro" id="IPR015424">
    <property type="entry name" value="PyrdxlP-dep_Trfase"/>
</dbReference>
<dbReference type="InterPro" id="IPR015421">
    <property type="entry name" value="PyrdxlP-dep_Trfase_major"/>
</dbReference>
<dbReference type="InterPro" id="IPR015422">
    <property type="entry name" value="PyrdxlP-dep_Trfase_small"/>
</dbReference>
<dbReference type="NCBIfam" id="TIGR00713">
    <property type="entry name" value="hemL"/>
    <property type="match status" value="1"/>
</dbReference>
<dbReference type="NCBIfam" id="NF000818">
    <property type="entry name" value="PRK00062.1"/>
    <property type="match status" value="1"/>
</dbReference>
<dbReference type="PANTHER" id="PTHR43713">
    <property type="entry name" value="GLUTAMATE-1-SEMIALDEHYDE 2,1-AMINOMUTASE"/>
    <property type="match status" value="1"/>
</dbReference>
<dbReference type="PANTHER" id="PTHR43713:SF3">
    <property type="entry name" value="GLUTAMATE-1-SEMIALDEHYDE 2,1-AMINOMUTASE 1, CHLOROPLASTIC-RELATED"/>
    <property type="match status" value="1"/>
</dbReference>
<dbReference type="Pfam" id="PF00202">
    <property type="entry name" value="Aminotran_3"/>
    <property type="match status" value="1"/>
</dbReference>
<dbReference type="SUPFAM" id="SSF53383">
    <property type="entry name" value="PLP-dependent transferases"/>
    <property type="match status" value="1"/>
</dbReference>
<dbReference type="PROSITE" id="PS00600">
    <property type="entry name" value="AA_TRANSFER_CLASS_3"/>
    <property type="match status" value="1"/>
</dbReference>
<organism>
    <name type="scientific">Cupriavidus pinatubonensis (strain JMP 134 / LMG 1197)</name>
    <name type="common">Cupriavidus necator (strain JMP 134)</name>
    <dbReference type="NCBI Taxonomy" id="264198"/>
    <lineage>
        <taxon>Bacteria</taxon>
        <taxon>Pseudomonadati</taxon>
        <taxon>Pseudomonadota</taxon>
        <taxon>Betaproteobacteria</taxon>
        <taxon>Burkholderiales</taxon>
        <taxon>Burkholderiaceae</taxon>
        <taxon>Cupriavidus</taxon>
    </lineage>
</organism>
<gene>
    <name evidence="1" type="primary">hemL</name>
    <name type="ordered locus">Reut_A2625</name>
</gene>
<reference key="1">
    <citation type="journal article" date="2010" name="PLoS ONE">
        <title>The complete multipartite genome sequence of Cupriavidus necator JMP134, a versatile pollutant degrader.</title>
        <authorList>
            <person name="Lykidis A."/>
            <person name="Perez-Pantoja D."/>
            <person name="Ledger T."/>
            <person name="Mavromatis K."/>
            <person name="Anderson I.J."/>
            <person name="Ivanova N.N."/>
            <person name="Hooper S.D."/>
            <person name="Lapidus A."/>
            <person name="Lucas S."/>
            <person name="Gonzalez B."/>
            <person name="Kyrpides N.C."/>
        </authorList>
    </citation>
    <scope>NUCLEOTIDE SEQUENCE [LARGE SCALE GENOMIC DNA]</scope>
    <source>
        <strain>JMP134 / LMG 1197</strain>
    </source>
</reference>
<accession>Q46XZ7</accession>
<name>GSA_CUPPJ</name>
<feature type="chain" id="PRO_0000243609" description="Glutamate-1-semialdehyde 2,1-aminomutase">
    <location>
        <begin position="1"/>
        <end position="429"/>
    </location>
</feature>
<feature type="modified residue" description="N6-(pyridoxal phosphate)lysine" evidence="1">
    <location>
        <position position="270"/>
    </location>
</feature>
<protein>
    <recommendedName>
        <fullName evidence="1">Glutamate-1-semialdehyde 2,1-aminomutase</fullName>
        <shortName evidence="1">GSA</shortName>
        <ecNumber evidence="1">5.4.3.8</ecNumber>
    </recommendedName>
    <alternativeName>
        <fullName evidence="1">Glutamate-1-semialdehyde aminotransferase</fullName>
        <shortName evidence="1">GSA-AT</shortName>
    </alternativeName>
</protein>